<dbReference type="EMBL" id="CP000143">
    <property type="protein sequence ID" value="ABA77866.1"/>
    <property type="molecule type" value="Genomic_DNA"/>
</dbReference>
<dbReference type="RefSeq" id="WP_002722496.1">
    <property type="nucleotide sequence ID" value="NZ_AKVW01000001.1"/>
</dbReference>
<dbReference type="RefSeq" id="YP_351767.1">
    <property type="nucleotide sequence ID" value="NC_007493.2"/>
</dbReference>
<dbReference type="SMR" id="Q3J5R8"/>
<dbReference type="STRING" id="272943.RSP_1720"/>
<dbReference type="EnsemblBacteria" id="ABA77866">
    <property type="protein sequence ID" value="ABA77866"/>
    <property type="gene ID" value="RSP_1720"/>
</dbReference>
<dbReference type="GeneID" id="67445504"/>
<dbReference type="KEGG" id="rsp:RSP_1720"/>
<dbReference type="PATRIC" id="fig|272943.9.peg.597"/>
<dbReference type="eggNOG" id="COG0185">
    <property type="taxonomic scope" value="Bacteria"/>
</dbReference>
<dbReference type="OrthoDB" id="9797833at2"/>
<dbReference type="PhylomeDB" id="Q3J5R8"/>
<dbReference type="Proteomes" id="UP000002703">
    <property type="component" value="Chromosome 1"/>
</dbReference>
<dbReference type="GO" id="GO:0005737">
    <property type="term" value="C:cytoplasm"/>
    <property type="evidence" value="ECO:0007669"/>
    <property type="project" value="UniProtKB-ARBA"/>
</dbReference>
<dbReference type="GO" id="GO:0015935">
    <property type="term" value="C:small ribosomal subunit"/>
    <property type="evidence" value="ECO:0007669"/>
    <property type="project" value="InterPro"/>
</dbReference>
<dbReference type="GO" id="GO:0019843">
    <property type="term" value="F:rRNA binding"/>
    <property type="evidence" value="ECO:0007669"/>
    <property type="project" value="UniProtKB-UniRule"/>
</dbReference>
<dbReference type="GO" id="GO:0003735">
    <property type="term" value="F:structural constituent of ribosome"/>
    <property type="evidence" value="ECO:0007669"/>
    <property type="project" value="InterPro"/>
</dbReference>
<dbReference type="GO" id="GO:0000028">
    <property type="term" value="P:ribosomal small subunit assembly"/>
    <property type="evidence" value="ECO:0007669"/>
    <property type="project" value="TreeGrafter"/>
</dbReference>
<dbReference type="GO" id="GO:0006412">
    <property type="term" value="P:translation"/>
    <property type="evidence" value="ECO:0007669"/>
    <property type="project" value="UniProtKB-UniRule"/>
</dbReference>
<dbReference type="FunFam" id="3.30.860.10:FF:000001">
    <property type="entry name" value="30S ribosomal protein S19"/>
    <property type="match status" value="1"/>
</dbReference>
<dbReference type="Gene3D" id="3.30.860.10">
    <property type="entry name" value="30s Ribosomal Protein S19, Chain A"/>
    <property type="match status" value="1"/>
</dbReference>
<dbReference type="HAMAP" id="MF_00531">
    <property type="entry name" value="Ribosomal_uS19"/>
    <property type="match status" value="1"/>
</dbReference>
<dbReference type="InterPro" id="IPR002222">
    <property type="entry name" value="Ribosomal_uS19"/>
</dbReference>
<dbReference type="InterPro" id="IPR005732">
    <property type="entry name" value="Ribosomal_uS19_bac-type"/>
</dbReference>
<dbReference type="InterPro" id="IPR020934">
    <property type="entry name" value="Ribosomal_uS19_CS"/>
</dbReference>
<dbReference type="InterPro" id="IPR023575">
    <property type="entry name" value="Ribosomal_uS19_SF"/>
</dbReference>
<dbReference type="NCBIfam" id="TIGR01050">
    <property type="entry name" value="rpsS_bact"/>
    <property type="match status" value="1"/>
</dbReference>
<dbReference type="PANTHER" id="PTHR11880">
    <property type="entry name" value="RIBOSOMAL PROTEIN S19P FAMILY MEMBER"/>
    <property type="match status" value="1"/>
</dbReference>
<dbReference type="PANTHER" id="PTHR11880:SF8">
    <property type="entry name" value="SMALL RIBOSOMAL SUBUNIT PROTEIN US19M"/>
    <property type="match status" value="1"/>
</dbReference>
<dbReference type="Pfam" id="PF00203">
    <property type="entry name" value="Ribosomal_S19"/>
    <property type="match status" value="1"/>
</dbReference>
<dbReference type="PIRSF" id="PIRSF002144">
    <property type="entry name" value="Ribosomal_S19"/>
    <property type="match status" value="1"/>
</dbReference>
<dbReference type="PRINTS" id="PR00975">
    <property type="entry name" value="RIBOSOMALS19"/>
</dbReference>
<dbReference type="SUPFAM" id="SSF54570">
    <property type="entry name" value="Ribosomal protein S19"/>
    <property type="match status" value="1"/>
</dbReference>
<dbReference type="PROSITE" id="PS00323">
    <property type="entry name" value="RIBOSOMAL_S19"/>
    <property type="match status" value="1"/>
</dbReference>
<comment type="function">
    <text evidence="1">Protein S19 forms a complex with S13 that binds strongly to the 16S ribosomal RNA.</text>
</comment>
<comment type="similarity">
    <text evidence="1">Belongs to the universal ribosomal protein uS19 family.</text>
</comment>
<keyword id="KW-1185">Reference proteome</keyword>
<keyword id="KW-0687">Ribonucleoprotein</keyword>
<keyword id="KW-0689">Ribosomal protein</keyword>
<keyword id="KW-0694">RNA-binding</keyword>
<keyword id="KW-0699">rRNA-binding</keyword>
<accession>Q3J5R8</accession>
<evidence type="ECO:0000255" key="1">
    <source>
        <dbReference type="HAMAP-Rule" id="MF_00531"/>
    </source>
</evidence>
<evidence type="ECO:0000305" key="2"/>
<name>RS19_CERS4</name>
<organism>
    <name type="scientific">Cereibacter sphaeroides (strain ATCC 17023 / DSM 158 / JCM 6121 / CCUG 31486 / LMG 2827 / NBRC 12203 / NCIMB 8253 / ATH 2.4.1.)</name>
    <name type="common">Rhodobacter sphaeroides</name>
    <dbReference type="NCBI Taxonomy" id="272943"/>
    <lineage>
        <taxon>Bacteria</taxon>
        <taxon>Pseudomonadati</taxon>
        <taxon>Pseudomonadota</taxon>
        <taxon>Alphaproteobacteria</taxon>
        <taxon>Rhodobacterales</taxon>
        <taxon>Paracoccaceae</taxon>
        <taxon>Cereibacter</taxon>
    </lineage>
</organism>
<protein>
    <recommendedName>
        <fullName evidence="1">Small ribosomal subunit protein uS19</fullName>
    </recommendedName>
    <alternativeName>
        <fullName evidence="2">30S ribosomal protein S19</fullName>
    </alternativeName>
</protein>
<sequence length="92" mass="10524">MARSTWKGPFVDGYLLKKAEKSRESGKNEVIKIWSRRSTILPQFVGLTFGVYNGKKHVPVNVTEEMIGQKFGEYSPTRTYYGHAADKKAKRK</sequence>
<feature type="chain" id="PRO_0000265412" description="Small ribosomal subunit protein uS19">
    <location>
        <begin position="1"/>
        <end position="92"/>
    </location>
</feature>
<proteinExistence type="inferred from homology"/>
<gene>
    <name evidence="1" type="primary">rpsS</name>
    <name type="ordered locus">RHOS4_02980</name>
    <name type="ORF">RSP_1720</name>
</gene>
<reference key="1">
    <citation type="submission" date="2005-09" db="EMBL/GenBank/DDBJ databases">
        <title>Complete sequence of chromosome 1 of Rhodobacter sphaeroides 2.4.1.</title>
        <authorList>
            <person name="Copeland A."/>
            <person name="Lucas S."/>
            <person name="Lapidus A."/>
            <person name="Barry K."/>
            <person name="Detter J.C."/>
            <person name="Glavina T."/>
            <person name="Hammon N."/>
            <person name="Israni S."/>
            <person name="Pitluck S."/>
            <person name="Richardson P."/>
            <person name="Mackenzie C."/>
            <person name="Choudhary M."/>
            <person name="Larimer F."/>
            <person name="Hauser L.J."/>
            <person name="Land M."/>
            <person name="Donohue T.J."/>
            <person name="Kaplan S."/>
        </authorList>
    </citation>
    <scope>NUCLEOTIDE SEQUENCE [LARGE SCALE GENOMIC DNA]</scope>
    <source>
        <strain>ATCC 17023 / DSM 158 / JCM 6121 / CCUG 31486 / LMG 2827 / NBRC 12203 / NCIMB 8253 / ATH 2.4.1.</strain>
    </source>
</reference>